<keyword id="KW-0169">Cobalamin biosynthesis</keyword>
<keyword id="KW-0456">Lyase</keyword>
<keyword id="KW-0489">Methyltransferase</keyword>
<keyword id="KW-0511">Multifunctional enzyme</keyword>
<keyword id="KW-0520">NAD</keyword>
<keyword id="KW-0560">Oxidoreductase</keyword>
<keyword id="KW-0597">Phosphoprotein</keyword>
<keyword id="KW-0627">Porphyrin biosynthesis</keyword>
<keyword id="KW-1185">Reference proteome</keyword>
<keyword id="KW-0949">S-adenosyl-L-methionine</keyword>
<keyword id="KW-0808">Transferase</keyword>
<protein>
    <recommendedName>
        <fullName evidence="1">Siroheme synthase</fullName>
    </recommendedName>
    <domain>
        <recommendedName>
            <fullName evidence="1">Uroporphyrinogen-III C-methyltransferase</fullName>
            <shortName evidence="1">Urogen III methylase</shortName>
            <ecNumber evidence="1">2.1.1.107</ecNumber>
        </recommendedName>
        <alternativeName>
            <fullName evidence="1">SUMT</fullName>
        </alternativeName>
        <alternativeName>
            <fullName evidence="1">Uroporphyrinogen III methylase</fullName>
            <shortName evidence="1">UROM</shortName>
        </alternativeName>
    </domain>
    <domain>
        <recommendedName>
            <fullName evidence="1">Precorrin-2 dehydrogenase</fullName>
            <ecNumber evidence="1">1.3.1.76</ecNumber>
        </recommendedName>
    </domain>
    <domain>
        <recommendedName>
            <fullName evidence="1">Sirohydrochlorin ferrochelatase</fullName>
            <ecNumber evidence="1">4.99.1.4</ecNumber>
        </recommendedName>
    </domain>
</protein>
<gene>
    <name evidence="1" type="primary">cysG</name>
    <name type="ordered locus">SARI_04135</name>
</gene>
<feature type="chain" id="PRO_0000330552" description="Siroheme synthase">
    <location>
        <begin position="1"/>
        <end position="457"/>
    </location>
</feature>
<feature type="region of interest" description="Precorrin-2 dehydrogenase /sirohydrochlorin ferrochelatase" evidence="1">
    <location>
        <begin position="1"/>
        <end position="204"/>
    </location>
</feature>
<feature type="region of interest" description="Uroporphyrinogen-III C-methyltransferase" evidence="1">
    <location>
        <begin position="216"/>
        <end position="457"/>
    </location>
</feature>
<feature type="active site" description="Proton acceptor" evidence="1">
    <location>
        <position position="248"/>
    </location>
</feature>
<feature type="active site" description="Proton donor" evidence="1">
    <location>
        <position position="270"/>
    </location>
</feature>
<feature type="binding site" evidence="1">
    <location>
        <begin position="22"/>
        <end position="23"/>
    </location>
    <ligand>
        <name>NAD(+)</name>
        <dbReference type="ChEBI" id="CHEBI:57540"/>
    </ligand>
</feature>
<feature type="binding site" evidence="1">
    <location>
        <begin position="43"/>
        <end position="44"/>
    </location>
    <ligand>
        <name>NAD(+)</name>
        <dbReference type="ChEBI" id="CHEBI:57540"/>
    </ligand>
</feature>
<feature type="binding site" evidence="1">
    <location>
        <position position="225"/>
    </location>
    <ligand>
        <name>S-adenosyl-L-methionine</name>
        <dbReference type="ChEBI" id="CHEBI:59789"/>
    </ligand>
</feature>
<feature type="binding site" evidence="1">
    <location>
        <begin position="301"/>
        <end position="303"/>
    </location>
    <ligand>
        <name>S-adenosyl-L-methionine</name>
        <dbReference type="ChEBI" id="CHEBI:59789"/>
    </ligand>
</feature>
<feature type="binding site" evidence="1">
    <location>
        <position position="306"/>
    </location>
    <ligand>
        <name>S-adenosyl-L-methionine</name>
        <dbReference type="ChEBI" id="CHEBI:59789"/>
    </ligand>
</feature>
<feature type="binding site" evidence="1">
    <location>
        <begin position="331"/>
        <end position="332"/>
    </location>
    <ligand>
        <name>S-adenosyl-L-methionine</name>
        <dbReference type="ChEBI" id="CHEBI:59789"/>
    </ligand>
</feature>
<feature type="binding site" evidence="1">
    <location>
        <position position="382"/>
    </location>
    <ligand>
        <name>S-adenosyl-L-methionine</name>
        <dbReference type="ChEBI" id="CHEBI:59789"/>
    </ligand>
</feature>
<feature type="binding site" evidence="1">
    <location>
        <position position="411"/>
    </location>
    <ligand>
        <name>S-adenosyl-L-methionine</name>
        <dbReference type="ChEBI" id="CHEBI:59789"/>
    </ligand>
</feature>
<feature type="modified residue" description="Phosphoserine" evidence="1">
    <location>
        <position position="128"/>
    </location>
</feature>
<proteinExistence type="inferred from homology"/>
<accession>A9MME5</accession>
<comment type="function">
    <text evidence="1">Multifunctional enzyme that catalyzes the SAM-dependent methylations of uroporphyrinogen III at position C-2 and C-7 to form precorrin-2 via precorrin-1. Then it catalyzes the NAD-dependent ring dehydrogenation of precorrin-2 to yield sirohydrochlorin. Finally, it catalyzes the ferrochelation of sirohydrochlorin to yield siroheme.</text>
</comment>
<comment type="catalytic activity">
    <reaction evidence="1">
        <text>uroporphyrinogen III + 2 S-adenosyl-L-methionine = precorrin-2 + 2 S-adenosyl-L-homocysteine + H(+)</text>
        <dbReference type="Rhea" id="RHEA:32459"/>
        <dbReference type="ChEBI" id="CHEBI:15378"/>
        <dbReference type="ChEBI" id="CHEBI:57308"/>
        <dbReference type="ChEBI" id="CHEBI:57856"/>
        <dbReference type="ChEBI" id="CHEBI:58827"/>
        <dbReference type="ChEBI" id="CHEBI:59789"/>
        <dbReference type="EC" id="2.1.1.107"/>
    </reaction>
</comment>
<comment type="catalytic activity">
    <reaction evidence="1">
        <text>precorrin-2 + NAD(+) = sirohydrochlorin + NADH + 2 H(+)</text>
        <dbReference type="Rhea" id="RHEA:15613"/>
        <dbReference type="ChEBI" id="CHEBI:15378"/>
        <dbReference type="ChEBI" id="CHEBI:57540"/>
        <dbReference type="ChEBI" id="CHEBI:57945"/>
        <dbReference type="ChEBI" id="CHEBI:58351"/>
        <dbReference type="ChEBI" id="CHEBI:58827"/>
        <dbReference type="EC" id="1.3.1.76"/>
    </reaction>
</comment>
<comment type="catalytic activity">
    <reaction evidence="1">
        <text>siroheme + 2 H(+) = sirohydrochlorin + Fe(2+)</text>
        <dbReference type="Rhea" id="RHEA:24360"/>
        <dbReference type="ChEBI" id="CHEBI:15378"/>
        <dbReference type="ChEBI" id="CHEBI:29033"/>
        <dbReference type="ChEBI" id="CHEBI:58351"/>
        <dbReference type="ChEBI" id="CHEBI:60052"/>
        <dbReference type="EC" id="4.99.1.4"/>
    </reaction>
</comment>
<comment type="pathway">
    <text evidence="1">Cofactor biosynthesis; adenosylcobalamin biosynthesis; precorrin-2 from uroporphyrinogen III: step 1/1.</text>
</comment>
<comment type="pathway">
    <text evidence="1">Cofactor biosynthesis; adenosylcobalamin biosynthesis; sirohydrochlorin from precorrin-2: step 1/1.</text>
</comment>
<comment type="pathway">
    <text evidence="1">Porphyrin-containing compound metabolism; siroheme biosynthesis; precorrin-2 from uroporphyrinogen III: step 1/1.</text>
</comment>
<comment type="pathway">
    <text evidence="1">Porphyrin-containing compound metabolism; siroheme biosynthesis; siroheme from sirohydrochlorin: step 1/1.</text>
</comment>
<comment type="pathway">
    <text evidence="1">Porphyrin-containing compound metabolism; siroheme biosynthesis; sirohydrochlorin from precorrin-2: step 1/1.</text>
</comment>
<comment type="similarity">
    <text evidence="1">In the N-terminal section; belongs to the precorrin-2 dehydrogenase / sirohydrochlorin ferrochelatase family.</text>
</comment>
<comment type="similarity">
    <text evidence="1">In the C-terminal section; belongs to the precorrin methyltransferase family.</text>
</comment>
<evidence type="ECO:0000255" key="1">
    <source>
        <dbReference type="HAMAP-Rule" id="MF_01646"/>
    </source>
</evidence>
<name>CYSG_SALAR</name>
<dbReference type="EC" id="2.1.1.107" evidence="1"/>
<dbReference type="EC" id="1.3.1.76" evidence="1"/>
<dbReference type="EC" id="4.99.1.4" evidence="1"/>
<dbReference type="EMBL" id="CP000880">
    <property type="protein sequence ID" value="ABX23924.1"/>
    <property type="molecule type" value="Genomic_DNA"/>
</dbReference>
<dbReference type="SMR" id="A9MME5"/>
<dbReference type="STRING" id="41514.SARI_04135"/>
<dbReference type="KEGG" id="ses:SARI_04135"/>
<dbReference type="HOGENOM" id="CLU_011276_2_0_6"/>
<dbReference type="UniPathway" id="UPA00148">
    <property type="reaction ID" value="UER00211"/>
</dbReference>
<dbReference type="UniPathway" id="UPA00148">
    <property type="reaction ID" value="UER00222"/>
</dbReference>
<dbReference type="UniPathway" id="UPA00262">
    <property type="reaction ID" value="UER00211"/>
</dbReference>
<dbReference type="UniPathway" id="UPA00262">
    <property type="reaction ID" value="UER00222"/>
</dbReference>
<dbReference type="UniPathway" id="UPA00262">
    <property type="reaction ID" value="UER00376"/>
</dbReference>
<dbReference type="Proteomes" id="UP000002084">
    <property type="component" value="Chromosome"/>
</dbReference>
<dbReference type="GO" id="GO:0051287">
    <property type="term" value="F:NAD binding"/>
    <property type="evidence" value="ECO:0007669"/>
    <property type="project" value="InterPro"/>
</dbReference>
<dbReference type="GO" id="GO:0043115">
    <property type="term" value="F:precorrin-2 dehydrogenase activity"/>
    <property type="evidence" value="ECO:0007669"/>
    <property type="project" value="UniProtKB-UniRule"/>
</dbReference>
<dbReference type="GO" id="GO:0051266">
    <property type="term" value="F:sirohydrochlorin ferrochelatase activity"/>
    <property type="evidence" value="ECO:0007669"/>
    <property type="project" value="UniProtKB-EC"/>
</dbReference>
<dbReference type="GO" id="GO:0004851">
    <property type="term" value="F:uroporphyrin-III C-methyltransferase activity"/>
    <property type="evidence" value="ECO:0007669"/>
    <property type="project" value="UniProtKB-UniRule"/>
</dbReference>
<dbReference type="GO" id="GO:0009236">
    <property type="term" value="P:cobalamin biosynthetic process"/>
    <property type="evidence" value="ECO:0007669"/>
    <property type="project" value="UniProtKB-UniRule"/>
</dbReference>
<dbReference type="GO" id="GO:0032259">
    <property type="term" value="P:methylation"/>
    <property type="evidence" value="ECO:0007669"/>
    <property type="project" value="UniProtKB-KW"/>
</dbReference>
<dbReference type="GO" id="GO:0019354">
    <property type="term" value="P:siroheme biosynthetic process"/>
    <property type="evidence" value="ECO:0007669"/>
    <property type="project" value="UniProtKB-UniRule"/>
</dbReference>
<dbReference type="CDD" id="cd11642">
    <property type="entry name" value="SUMT"/>
    <property type="match status" value="1"/>
</dbReference>
<dbReference type="FunFam" id="1.10.8.210:FF:000001">
    <property type="entry name" value="Siroheme synthase"/>
    <property type="match status" value="1"/>
</dbReference>
<dbReference type="FunFam" id="3.30.160.110:FF:000001">
    <property type="entry name" value="Siroheme synthase"/>
    <property type="match status" value="1"/>
</dbReference>
<dbReference type="FunFam" id="3.30.950.10:FF:000001">
    <property type="entry name" value="Siroheme synthase"/>
    <property type="match status" value="1"/>
</dbReference>
<dbReference type="FunFam" id="3.40.1010.10:FF:000001">
    <property type="entry name" value="Siroheme synthase"/>
    <property type="match status" value="1"/>
</dbReference>
<dbReference type="FunFam" id="3.40.50.720:FF:000092">
    <property type="entry name" value="Siroheme synthase"/>
    <property type="match status" value="1"/>
</dbReference>
<dbReference type="Gene3D" id="3.40.1010.10">
    <property type="entry name" value="Cobalt-precorrin-4 Transmethylase, Domain 1"/>
    <property type="match status" value="1"/>
</dbReference>
<dbReference type="Gene3D" id="3.30.950.10">
    <property type="entry name" value="Methyltransferase, Cobalt-precorrin-4 Transmethylase, Domain 2"/>
    <property type="match status" value="1"/>
</dbReference>
<dbReference type="Gene3D" id="3.40.50.720">
    <property type="entry name" value="NAD(P)-binding Rossmann-like Domain"/>
    <property type="match status" value="1"/>
</dbReference>
<dbReference type="Gene3D" id="1.10.8.210">
    <property type="entry name" value="Sirohaem synthase, dimerisation domain"/>
    <property type="match status" value="1"/>
</dbReference>
<dbReference type="Gene3D" id="3.30.160.110">
    <property type="entry name" value="Siroheme synthase, domain 2"/>
    <property type="match status" value="1"/>
</dbReference>
<dbReference type="HAMAP" id="MF_01646">
    <property type="entry name" value="Siroheme_synth"/>
    <property type="match status" value="1"/>
</dbReference>
<dbReference type="InterPro" id="IPR000878">
    <property type="entry name" value="4pyrrol_Mease"/>
</dbReference>
<dbReference type="InterPro" id="IPR035996">
    <property type="entry name" value="4pyrrol_Methylase_sf"/>
</dbReference>
<dbReference type="InterPro" id="IPR014777">
    <property type="entry name" value="4pyrrole_Mease_sub1"/>
</dbReference>
<dbReference type="InterPro" id="IPR014776">
    <property type="entry name" value="4pyrrole_Mease_sub2"/>
</dbReference>
<dbReference type="InterPro" id="IPR006366">
    <property type="entry name" value="CobA/CysG_C"/>
</dbReference>
<dbReference type="InterPro" id="IPR036291">
    <property type="entry name" value="NAD(P)-bd_dom_sf"/>
</dbReference>
<dbReference type="InterPro" id="IPR050161">
    <property type="entry name" value="Siro_Cobalamin_biosynth"/>
</dbReference>
<dbReference type="InterPro" id="IPR037115">
    <property type="entry name" value="Sirohaem_synt_dimer_dom_sf"/>
</dbReference>
<dbReference type="InterPro" id="IPR012409">
    <property type="entry name" value="Sirohaem_synth"/>
</dbReference>
<dbReference type="InterPro" id="IPR028281">
    <property type="entry name" value="Sirohaem_synthase_central"/>
</dbReference>
<dbReference type="InterPro" id="IPR019478">
    <property type="entry name" value="Sirohaem_synthase_dimer_dom"/>
</dbReference>
<dbReference type="InterPro" id="IPR006367">
    <property type="entry name" value="Sirohaem_synthase_N"/>
</dbReference>
<dbReference type="InterPro" id="IPR003043">
    <property type="entry name" value="Uropor_MeTrfase_CS"/>
</dbReference>
<dbReference type="NCBIfam" id="TIGR01469">
    <property type="entry name" value="cobA_cysG_Cterm"/>
    <property type="match status" value="1"/>
</dbReference>
<dbReference type="NCBIfam" id="TIGR01470">
    <property type="entry name" value="cysG_Nterm"/>
    <property type="match status" value="1"/>
</dbReference>
<dbReference type="NCBIfam" id="NF004790">
    <property type="entry name" value="PRK06136.1"/>
    <property type="match status" value="1"/>
</dbReference>
<dbReference type="NCBIfam" id="NF007922">
    <property type="entry name" value="PRK10637.1"/>
    <property type="match status" value="1"/>
</dbReference>
<dbReference type="PANTHER" id="PTHR45790:SF1">
    <property type="entry name" value="SIROHEME SYNTHASE"/>
    <property type="match status" value="1"/>
</dbReference>
<dbReference type="PANTHER" id="PTHR45790">
    <property type="entry name" value="SIROHEME SYNTHASE-RELATED"/>
    <property type="match status" value="1"/>
</dbReference>
<dbReference type="Pfam" id="PF10414">
    <property type="entry name" value="CysG_dimeriser"/>
    <property type="match status" value="1"/>
</dbReference>
<dbReference type="Pfam" id="PF13241">
    <property type="entry name" value="NAD_binding_7"/>
    <property type="match status" value="1"/>
</dbReference>
<dbReference type="Pfam" id="PF14824">
    <property type="entry name" value="Sirohm_synth_M"/>
    <property type="match status" value="1"/>
</dbReference>
<dbReference type="Pfam" id="PF00590">
    <property type="entry name" value="TP_methylase"/>
    <property type="match status" value="1"/>
</dbReference>
<dbReference type="PIRSF" id="PIRSF036426">
    <property type="entry name" value="Sirohaem_synth"/>
    <property type="match status" value="1"/>
</dbReference>
<dbReference type="SUPFAM" id="SSF51735">
    <property type="entry name" value="NAD(P)-binding Rossmann-fold domains"/>
    <property type="match status" value="1"/>
</dbReference>
<dbReference type="SUPFAM" id="SSF75615">
    <property type="entry name" value="Siroheme synthase middle domains-like"/>
    <property type="match status" value="1"/>
</dbReference>
<dbReference type="SUPFAM" id="SSF53790">
    <property type="entry name" value="Tetrapyrrole methylase"/>
    <property type="match status" value="1"/>
</dbReference>
<dbReference type="PROSITE" id="PS00839">
    <property type="entry name" value="SUMT_1"/>
    <property type="match status" value="1"/>
</dbReference>
<dbReference type="PROSITE" id="PS00840">
    <property type="entry name" value="SUMT_2"/>
    <property type="match status" value="1"/>
</dbReference>
<organism>
    <name type="scientific">Salmonella arizonae (strain ATCC BAA-731 / CDC346-86 / RSK2980)</name>
    <dbReference type="NCBI Taxonomy" id="41514"/>
    <lineage>
        <taxon>Bacteria</taxon>
        <taxon>Pseudomonadati</taxon>
        <taxon>Pseudomonadota</taxon>
        <taxon>Gammaproteobacteria</taxon>
        <taxon>Enterobacterales</taxon>
        <taxon>Enterobacteriaceae</taxon>
        <taxon>Salmonella</taxon>
    </lineage>
</organism>
<sequence length="457" mass="49970">MDHLPIFCQLRDRDCLIVGGGDVAERKARLLLEAGARLTVNALTFIPQFTVWADEGMLTLVEGPFDEALLDPCWLAIAATDDDAVNQHVSEAAESRRIFCNVVDAPKAASFIMPSIIDRSPLMVAVSSGGTSPVLARLLREKLESILPQHLGQVAQYAGQLRARVKKQFITMGERRRFWEKFFVNDRLAQSLANADEKAVNATTEQLFSEPLDHRGEVVLVGAGPGDAGLLTLKGLQQIQQADIVVYDRLVSDDIMNLVRRDADRVFVGKRAGYHCVPQEEINQILLREAQKGKRVVRLKGGDPFIFGRGGEELETLCHAGIPFSVVPGITAASGCSAYSGLPLTHRDYAQSVRLVTGHLKTGGELDWENLAAEKQTLVFYMGLNQAATIQEKLIAFGMQADMPVALVENGTSIKQRVVNGELAQLGELAKQVASPALIIVGRVVGLRDKLNWFSSH</sequence>
<reference key="1">
    <citation type="submission" date="2007-11" db="EMBL/GenBank/DDBJ databases">
        <authorList>
            <consortium name="The Salmonella enterica serovar Arizonae Genome Sequencing Project"/>
            <person name="McClelland M."/>
            <person name="Sanderson E.K."/>
            <person name="Porwollik S."/>
            <person name="Spieth J."/>
            <person name="Clifton W.S."/>
            <person name="Fulton R."/>
            <person name="Chunyan W."/>
            <person name="Wollam A."/>
            <person name="Shah N."/>
            <person name="Pepin K."/>
            <person name="Bhonagiri V."/>
            <person name="Nash W."/>
            <person name="Johnson M."/>
            <person name="Thiruvilangam P."/>
            <person name="Wilson R."/>
        </authorList>
    </citation>
    <scope>NUCLEOTIDE SEQUENCE [LARGE SCALE GENOMIC DNA]</scope>
    <source>
        <strain>ATCC BAA-731 / CDC346-86 / RSK2980</strain>
    </source>
</reference>